<sequence length="161" mass="18468">MPSFDVVSELDKHEVQNAVENAIKELDRRYDLKGKGSFEFKEKEQTVLLTAEAEFQLEAMIEILRLALVKRKIDVKCLETKDAYASGKEMKQEAKFREGIDKELAKKIVAHIKDAKLKVQAAIQGEQVRVTGKKRDDLQEAIAALRAKEFDMPLQFNNFRD</sequence>
<keyword id="KW-0547">Nucleotide-binding</keyword>
<dbReference type="EMBL" id="CP000949">
    <property type="protein sequence ID" value="ACA71464.1"/>
    <property type="molecule type" value="Genomic_DNA"/>
</dbReference>
<dbReference type="SMR" id="B1J3J6"/>
<dbReference type="STRING" id="390235.PputW619_0959"/>
<dbReference type="KEGG" id="ppw:PputW619_0959"/>
<dbReference type="eggNOG" id="COG1666">
    <property type="taxonomic scope" value="Bacteria"/>
</dbReference>
<dbReference type="HOGENOM" id="CLU_099839_1_0_6"/>
<dbReference type="OrthoDB" id="9801447at2"/>
<dbReference type="GO" id="GO:0005829">
    <property type="term" value="C:cytosol"/>
    <property type="evidence" value="ECO:0007669"/>
    <property type="project" value="TreeGrafter"/>
</dbReference>
<dbReference type="GO" id="GO:0000166">
    <property type="term" value="F:nucleotide binding"/>
    <property type="evidence" value="ECO:0007669"/>
    <property type="project" value="TreeGrafter"/>
</dbReference>
<dbReference type="CDD" id="cd11740">
    <property type="entry name" value="YajQ_like"/>
    <property type="match status" value="1"/>
</dbReference>
<dbReference type="Gene3D" id="3.30.70.860">
    <property type="match status" value="1"/>
</dbReference>
<dbReference type="Gene3D" id="3.30.70.990">
    <property type="entry name" value="YajQ-like, domain 2"/>
    <property type="match status" value="1"/>
</dbReference>
<dbReference type="HAMAP" id="MF_00632">
    <property type="entry name" value="YajQ"/>
    <property type="match status" value="1"/>
</dbReference>
<dbReference type="InterPro" id="IPR007551">
    <property type="entry name" value="DUF520"/>
</dbReference>
<dbReference type="InterPro" id="IPR035571">
    <property type="entry name" value="UPF0234-like_C"/>
</dbReference>
<dbReference type="InterPro" id="IPR035570">
    <property type="entry name" value="UPF0234_N"/>
</dbReference>
<dbReference type="InterPro" id="IPR036183">
    <property type="entry name" value="YajQ-like_sf"/>
</dbReference>
<dbReference type="NCBIfam" id="NF003819">
    <property type="entry name" value="PRK05412.1"/>
    <property type="match status" value="1"/>
</dbReference>
<dbReference type="PANTHER" id="PTHR30476">
    <property type="entry name" value="UPF0234 PROTEIN YAJQ"/>
    <property type="match status" value="1"/>
</dbReference>
<dbReference type="PANTHER" id="PTHR30476:SF0">
    <property type="entry name" value="UPF0234 PROTEIN YAJQ"/>
    <property type="match status" value="1"/>
</dbReference>
<dbReference type="Pfam" id="PF04461">
    <property type="entry name" value="DUF520"/>
    <property type="match status" value="1"/>
</dbReference>
<dbReference type="SUPFAM" id="SSF89963">
    <property type="entry name" value="YajQ-like"/>
    <property type="match status" value="2"/>
</dbReference>
<comment type="function">
    <text evidence="1">Nucleotide-binding protein.</text>
</comment>
<comment type="similarity">
    <text evidence="1">Belongs to the YajQ family.</text>
</comment>
<proteinExistence type="inferred from homology"/>
<evidence type="ECO:0000255" key="1">
    <source>
        <dbReference type="HAMAP-Rule" id="MF_00632"/>
    </source>
</evidence>
<gene>
    <name type="ordered locus">PputW619_0959</name>
</gene>
<name>Y959_PSEPW</name>
<organism>
    <name type="scientific">Pseudomonas putida (strain W619)</name>
    <dbReference type="NCBI Taxonomy" id="390235"/>
    <lineage>
        <taxon>Bacteria</taxon>
        <taxon>Pseudomonadati</taxon>
        <taxon>Pseudomonadota</taxon>
        <taxon>Gammaproteobacteria</taxon>
        <taxon>Pseudomonadales</taxon>
        <taxon>Pseudomonadaceae</taxon>
        <taxon>Pseudomonas</taxon>
    </lineage>
</organism>
<protein>
    <recommendedName>
        <fullName evidence="1">Nucleotide-binding protein PputW619_0959</fullName>
    </recommendedName>
</protein>
<reference key="1">
    <citation type="submission" date="2008-02" db="EMBL/GenBank/DDBJ databases">
        <title>Complete sequence of Pseudomonas putida W619.</title>
        <authorList>
            <person name="Copeland A."/>
            <person name="Lucas S."/>
            <person name="Lapidus A."/>
            <person name="Barry K."/>
            <person name="Detter J.C."/>
            <person name="Glavina del Rio T."/>
            <person name="Dalin E."/>
            <person name="Tice H."/>
            <person name="Pitluck S."/>
            <person name="Chain P."/>
            <person name="Malfatti S."/>
            <person name="Shin M."/>
            <person name="Vergez L."/>
            <person name="Schmutz J."/>
            <person name="Larimer F."/>
            <person name="Land M."/>
            <person name="Hauser L."/>
            <person name="Kyrpides N."/>
            <person name="Kim E."/>
            <person name="Taghavi S."/>
            <person name="Vangronsveld D."/>
            <person name="van der Lelie D."/>
            <person name="Richardson P."/>
        </authorList>
    </citation>
    <scope>NUCLEOTIDE SEQUENCE [LARGE SCALE GENOMIC DNA]</scope>
    <source>
        <strain>W619</strain>
    </source>
</reference>
<accession>B1J3J6</accession>
<feature type="chain" id="PRO_1000130642" description="Nucleotide-binding protein PputW619_0959">
    <location>
        <begin position="1"/>
        <end position="161"/>
    </location>
</feature>